<proteinExistence type="inferred from homology"/>
<comment type="function">
    <text evidence="1">Catalyzes two activities which are involved in the cyclic version of arginine biosynthesis: the synthesis of N-acetylglutamate from glutamate and acetyl-CoA as the acetyl donor, and of ornithine by transacetylation between N(2)-acetylornithine and glutamate.</text>
</comment>
<comment type="catalytic activity">
    <reaction evidence="1">
        <text>N(2)-acetyl-L-ornithine + L-glutamate = N-acetyl-L-glutamate + L-ornithine</text>
        <dbReference type="Rhea" id="RHEA:15349"/>
        <dbReference type="ChEBI" id="CHEBI:29985"/>
        <dbReference type="ChEBI" id="CHEBI:44337"/>
        <dbReference type="ChEBI" id="CHEBI:46911"/>
        <dbReference type="ChEBI" id="CHEBI:57805"/>
        <dbReference type="EC" id="2.3.1.35"/>
    </reaction>
</comment>
<comment type="catalytic activity">
    <reaction evidence="1">
        <text>L-glutamate + acetyl-CoA = N-acetyl-L-glutamate + CoA + H(+)</text>
        <dbReference type="Rhea" id="RHEA:24292"/>
        <dbReference type="ChEBI" id="CHEBI:15378"/>
        <dbReference type="ChEBI" id="CHEBI:29985"/>
        <dbReference type="ChEBI" id="CHEBI:44337"/>
        <dbReference type="ChEBI" id="CHEBI:57287"/>
        <dbReference type="ChEBI" id="CHEBI:57288"/>
        <dbReference type="EC" id="2.3.1.1"/>
    </reaction>
</comment>
<comment type="pathway">
    <text evidence="1">Amino-acid biosynthesis; L-arginine biosynthesis; L-ornithine and N-acetyl-L-glutamate from L-glutamate and N(2)-acetyl-L-ornithine (cyclic): step 1/1.</text>
</comment>
<comment type="pathway">
    <text evidence="1">Amino-acid biosynthesis; L-arginine biosynthesis; N(2)-acetyl-L-ornithine from L-glutamate: step 1/4.</text>
</comment>
<comment type="subunit">
    <text evidence="1">Heterotetramer of two alpha and two beta chains.</text>
</comment>
<comment type="subcellular location">
    <subcellularLocation>
        <location evidence="1">Cytoplasm</location>
    </subcellularLocation>
</comment>
<comment type="similarity">
    <text evidence="1">Belongs to the ArgJ family.</text>
</comment>
<organism>
    <name type="scientific">Symbiobacterium thermophilum (strain DSM 24528 / JCM 14929 / IAM 14863 / T)</name>
    <dbReference type="NCBI Taxonomy" id="292459"/>
    <lineage>
        <taxon>Bacteria</taxon>
        <taxon>Bacillati</taxon>
        <taxon>Bacillota</taxon>
        <taxon>Clostridia</taxon>
        <taxon>Eubacteriales</taxon>
        <taxon>Symbiobacteriaceae</taxon>
        <taxon>Symbiobacterium</taxon>
    </lineage>
</organism>
<protein>
    <recommendedName>
        <fullName evidence="1">Arginine biosynthesis bifunctional protein ArgJ</fullName>
    </recommendedName>
    <domain>
        <recommendedName>
            <fullName evidence="1">Glutamate N-acetyltransferase</fullName>
            <ecNumber evidence="1">2.3.1.35</ecNumber>
        </recommendedName>
        <alternativeName>
            <fullName evidence="1">Ornithine acetyltransferase</fullName>
            <shortName evidence="1">OATase</shortName>
        </alternativeName>
        <alternativeName>
            <fullName evidence="1">Ornithine transacetylase</fullName>
        </alternativeName>
    </domain>
    <domain>
        <recommendedName>
            <fullName evidence="1">Amino-acid acetyltransferase</fullName>
            <ecNumber evidence="1">2.3.1.1</ecNumber>
        </recommendedName>
        <alternativeName>
            <fullName evidence="1">N-acetylglutamate synthase</fullName>
            <shortName evidence="1">AGSase</shortName>
        </alternativeName>
    </domain>
    <component>
        <recommendedName>
            <fullName evidence="1">Arginine biosynthesis bifunctional protein ArgJ alpha chain</fullName>
        </recommendedName>
    </component>
    <component>
        <recommendedName>
            <fullName evidence="1">Arginine biosynthesis bifunctional protein ArgJ beta chain</fullName>
        </recommendedName>
    </component>
</protein>
<sequence>MEWLAGGVTAPAGFVAAGACADIKGNGAGKKDVALLASRVPCAAAGVYTTNLVKAAPVVLTRGRTETGELQAVVANSGNANACTGEQGMRDAAEMARLAAEALGIRPELMGVASTGVIGVPLPMDRVSAGIRAAAAALSPEGGADAAEAIMTTDTFPKQAAARLEIGGATVTIGAMAKGSGMIHPNMATMLGFVTTDAAVDAAALREALREATDRSFNMITVDGDTSTNDMVLVLANGLAGNPRIMPGSAHYRAFADALAAVLIHLAKEIARDGEGATKLIEVRVKGAATLSDARKAARAVCGSNLVKAAVFGEDANWGRVLAALGYSGAQFDPGRVDLWLGDLQMMRAGEPVAFDEAAAARVLREKEVVFTADLHAGECEATAWGCDLTYDYVKINGSYRT</sequence>
<reference key="1">
    <citation type="journal article" date="2004" name="Nucleic Acids Res.">
        <title>Genome sequence of Symbiobacterium thermophilum, an uncultivable bacterium that depends on microbial commensalism.</title>
        <authorList>
            <person name="Ueda K."/>
            <person name="Yamashita A."/>
            <person name="Ishikawa J."/>
            <person name="Shimada M."/>
            <person name="Watsuji T."/>
            <person name="Morimura K."/>
            <person name="Ikeda H."/>
            <person name="Hattori M."/>
            <person name="Beppu T."/>
        </authorList>
    </citation>
    <scope>NUCLEOTIDE SEQUENCE [LARGE SCALE GENOMIC DNA]</scope>
    <source>
        <strain>DSM 24528 / JCM 14929 / IAM 14863 / T</strain>
    </source>
</reference>
<keyword id="KW-0012">Acyltransferase</keyword>
<keyword id="KW-0028">Amino-acid biosynthesis</keyword>
<keyword id="KW-0055">Arginine biosynthesis</keyword>
<keyword id="KW-0068">Autocatalytic cleavage</keyword>
<keyword id="KW-0963">Cytoplasm</keyword>
<keyword id="KW-0511">Multifunctional enzyme</keyword>
<keyword id="KW-1185">Reference proteome</keyword>
<keyword id="KW-0808">Transferase</keyword>
<gene>
    <name evidence="1" type="primary">argJ</name>
    <name type="ordered locus">STH2890</name>
</gene>
<name>ARGJ_SYMTH</name>
<dbReference type="EC" id="2.3.1.35" evidence="1"/>
<dbReference type="EC" id="2.3.1.1" evidence="1"/>
<dbReference type="EMBL" id="AP006840">
    <property type="protein sequence ID" value="BAD41873.1"/>
    <property type="molecule type" value="Genomic_DNA"/>
</dbReference>
<dbReference type="RefSeq" id="WP_011197007.1">
    <property type="nucleotide sequence ID" value="NC_006177.1"/>
</dbReference>
<dbReference type="SMR" id="Q67KC5"/>
<dbReference type="STRING" id="292459.STH2890"/>
<dbReference type="MEROPS" id="T05.002"/>
<dbReference type="KEGG" id="sth:STH2890"/>
<dbReference type="eggNOG" id="COG1364">
    <property type="taxonomic scope" value="Bacteria"/>
</dbReference>
<dbReference type="HOGENOM" id="CLU_027172_1_0_9"/>
<dbReference type="OrthoDB" id="9804242at2"/>
<dbReference type="UniPathway" id="UPA00068">
    <property type="reaction ID" value="UER00106"/>
</dbReference>
<dbReference type="UniPathway" id="UPA00068">
    <property type="reaction ID" value="UER00111"/>
</dbReference>
<dbReference type="Proteomes" id="UP000000417">
    <property type="component" value="Chromosome"/>
</dbReference>
<dbReference type="GO" id="GO:0005737">
    <property type="term" value="C:cytoplasm"/>
    <property type="evidence" value="ECO:0007669"/>
    <property type="project" value="UniProtKB-SubCell"/>
</dbReference>
<dbReference type="GO" id="GO:0004358">
    <property type="term" value="F:glutamate N-acetyltransferase activity"/>
    <property type="evidence" value="ECO:0007669"/>
    <property type="project" value="UniProtKB-UniRule"/>
</dbReference>
<dbReference type="GO" id="GO:0004042">
    <property type="term" value="F:L-glutamate N-acetyltransferase activity"/>
    <property type="evidence" value="ECO:0007669"/>
    <property type="project" value="UniProtKB-UniRule"/>
</dbReference>
<dbReference type="GO" id="GO:0006526">
    <property type="term" value="P:L-arginine biosynthetic process"/>
    <property type="evidence" value="ECO:0007669"/>
    <property type="project" value="UniProtKB-UniRule"/>
</dbReference>
<dbReference type="GO" id="GO:0006592">
    <property type="term" value="P:ornithine biosynthetic process"/>
    <property type="evidence" value="ECO:0007669"/>
    <property type="project" value="TreeGrafter"/>
</dbReference>
<dbReference type="CDD" id="cd02152">
    <property type="entry name" value="OAT"/>
    <property type="match status" value="1"/>
</dbReference>
<dbReference type="FunFam" id="3.10.20.340:FF:000001">
    <property type="entry name" value="Arginine biosynthesis bifunctional protein ArgJ, chloroplastic"/>
    <property type="match status" value="1"/>
</dbReference>
<dbReference type="FunFam" id="3.60.70.12:FF:000001">
    <property type="entry name" value="Arginine biosynthesis bifunctional protein ArgJ, chloroplastic"/>
    <property type="match status" value="1"/>
</dbReference>
<dbReference type="Gene3D" id="3.10.20.340">
    <property type="entry name" value="ArgJ beta chain, C-terminal domain"/>
    <property type="match status" value="1"/>
</dbReference>
<dbReference type="Gene3D" id="3.60.70.12">
    <property type="entry name" value="L-amino peptidase D-ALA esterase/amidase"/>
    <property type="match status" value="1"/>
</dbReference>
<dbReference type="HAMAP" id="MF_01106">
    <property type="entry name" value="ArgJ"/>
    <property type="match status" value="1"/>
</dbReference>
<dbReference type="InterPro" id="IPR002813">
    <property type="entry name" value="Arg_biosynth_ArgJ"/>
</dbReference>
<dbReference type="InterPro" id="IPR016117">
    <property type="entry name" value="ArgJ-like_dom_sf"/>
</dbReference>
<dbReference type="InterPro" id="IPR042195">
    <property type="entry name" value="ArgJ_beta_C"/>
</dbReference>
<dbReference type="NCBIfam" id="TIGR00120">
    <property type="entry name" value="ArgJ"/>
    <property type="match status" value="1"/>
</dbReference>
<dbReference type="NCBIfam" id="NF003802">
    <property type="entry name" value="PRK05388.1"/>
    <property type="match status" value="1"/>
</dbReference>
<dbReference type="PANTHER" id="PTHR23100">
    <property type="entry name" value="ARGININE BIOSYNTHESIS BIFUNCTIONAL PROTEIN ARGJ"/>
    <property type="match status" value="1"/>
</dbReference>
<dbReference type="PANTHER" id="PTHR23100:SF0">
    <property type="entry name" value="ARGININE BIOSYNTHESIS BIFUNCTIONAL PROTEIN ARGJ, MITOCHONDRIAL"/>
    <property type="match status" value="1"/>
</dbReference>
<dbReference type="Pfam" id="PF01960">
    <property type="entry name" value="ArgJ"/>
    <property type="match status" value="1"/>
</dbReference>
<dbReference type="SUPFAM" id="SSF56266">
    <property type="entry name" value="DmpA/ArgJ-like"/>
    <property type="match status" value="1"/>
</dbReference>
<feature type="chain" id="PRO_0000227264" description="Arginine biosynthesis bifunctional protein ArgJ alpha chain" evidence="1">
    <location>
        <begin position="1"/>
        <end position="188"/>
    </location>
</feature>
<feature type="chain" id="PRO_0000227265" description="Arginine biosynthesis bifunctional protein ArgJ beta chain" evidence="1">
    <location>
        <begin position="189"/>
        <end position="402"/>
    </location>
</feature>
<feature type="active site" description="Nucleophile" evidence="1">
    <location>
        <position position="189"/>
    </location>
</feature>
<feature type="binding site" evidence="1">
    <location>
        <position position="152"/>
    </location>
    <ligand>
        <name>substrate</name>
    </ligand>
</feature>
<feature type="binding site" evidence="1">
    <location>
        <position position="178"/>
    </location>
    <ligand>
        <name>substrate</name>
    </ligand>
</feature>
<feature type="binding site" evidence="1">
    <location>
        <position position="189"/>
    </location>
    <ligand>
        <name>substrate</name>
    </ligand>
</feature>
<feature type="binding site" evidence="1">
    <location>
        <position position="275"/>
    </location>
    <ligand>
        <name>substrate</name>
    </ligand>
</feature>
<feature type="binding site" evidence="1">
    <location>
        <position position="397"/>
    </location>
    <ligand>
        <name>substrate</name>
    </ligand>
</feature>
<feature type="binding site" evidence="1">
    <location>
        <position position="402"/>
    </location>
    <ligand>
        <name>substrate</name>
    </ligand>
</feature>
<feature type="site" description="Involved in the stabilization of negative charge on the oxyanion by the formation of the oxyanion hole" evidence="1">
    <location>
        <position position="115"/>
    </location>
</feature>
<feature type="site" description="Involved in the stabilization of negative charge on the oxyanion by the formation of the oxyanion hole" evidence="1">
    <location>
        <position position="116"/>
    </location>
</feature>
<feature type="site" description="Cleavage; by autolysis" evidence="1">
    <location>
        <begin position="188"/>
        <end position="189"/>
    </location>
</feature>
<evidence type="ECO:0000255" key="1">
    <source>
        <dbReference type="HAMAP-Rule" id="MF_01106"/>
    </source>
</evidence>
<accession>Q67KC5</accession>